<gene>
    <name evidence="1" type="primary">pstB2</name>
    <name type="ordered locus">glr0448</name>
</gene>
<name>PSTB2_GLOVI</name>
<comment type="function">
    <text evidence="1">Part of the ABC transporter complex PstSACB involved in phosphate import. Responsible for energy coupling to the transport system.</text>
</comment>
<comment type="catalytic activity">
    <reaction evidence="1">
        <text>phosphate(out) + ATP + H2O = ADP + 2 phosphate(in) + H(+)</text>
        <dbReference type="Rhea" id="RHEA:24440"/>
        <dbReference type="ChEBI" id="CHEBI:15377"/>
        <dbReference type="ChEBI" id="CHEBI:15378"/>
        <dbReference type="ChEBI" id="CHEBI:30616"/>
        <dbReference type="ChEBI" id="CHEBI:43474"/>
        <dbReference type="ChEBI" id="CHEBI:456216"/>
        <dbReference type="EC" id="7.3.2.1"/>
    </reaction>
</comment>
<comment type="subunit">
    <text evidence="1">The complex is composed of two ATP-binding proteins (PstB), two transmembrane proteins (PstC and PstA) and a solute-binding protein (PstS).</text>
</comment>
<comment type="subcellular location">
    <subcellularLocation>
        <location evidence="1">Cell inner membrane</location>
        <topology evidence="1">Peripheral membrane protein</topology>
    </subcellularLocation>
</comment>
<comment type="similarity">
    <text evidence="1">Belongs to the ABC transporter superfamily. Phosphate importer (TC 3.A.1.7) family.</text>
</comment>
<evidence type="ECO:0000255" key="1">
    <source>
        <dbReference type="HAMAP-Rule" id="MF_01702"/>
    </source>
</evidence>
<dbReference type="EC" id="7.3.2.1" evidence="1"/>
<dbReference type="EMBL" id="BA000045">
    <property type="protein sequence ID" value="BAC88389.1"/>
    <property type="molecule type" value="Genomic_DNA"/>
</dbReference>
<dbReference type="RefSeq" id="NP_923394.1">
    <property type="nucleotide sequence ID" value="NC_005125.1"/>
</dbReference>
<dbReference type="RefSeq" id="WP_011140451.1">
    <property type="nucleotide sequence ID" value="NC_005125.1"/>
</dbReference>
<dbReference type="SMR" id="Q7NNG3"/>
<dbReference type="STRING" id="251221.gene:10757920"/>
<dbReference type="EnsemblBacteria" id="BAC88389">
    <property type="protein sequence ID" value="BAC88389"/>
    <property type="gene ID" value="BAC88389"/>
</dbReference>
<dbReference type="KEGG" id="gvi:glr0448"/>
<dbReference type="PATRIC" id="fig|251221.4.peg.456"/>
<dbReference type="eggNOG" id="COG1117">
    <property type="taxonomic scope" value="Bacteria"/>
</dbReference>
<dbReference type="HOGENOM" id="CLU_000604_1_22_3"/>
<dbReference type="InParanoid" id="Q7NNG3"/>
<dbReference type="OrthoDB" id="9802185at2"/>
<dbReference type="PhylomeDB" id="Q7NNG3"/>
<dbReference type="Proteomes" id="UP000000557">
    <property type="component" value="Chromosome"/>
</dbReference>
<dbReference type="GO" id="GO:0005886">
    <property type="term" value="C:plasma membrane"/>
    <property type="evidence" value="ECO:0007669"/>
    <property type="project" value="UniProtKB-SubCell"/>
</dbReference>
<dbReference type="GO" id="GO:0005524">
    <property type="term" value="F:ATP binding"/>
    <property type="evidence" value="ECO:0007669"/>
    <property type="project" value="UniProtKB-KW"/>
</dbReference>
<dbReference type="GO" id="GO:0016887">
    <property type="term" value="F:ATP hydrolysis activity"/>
    <property type="evidence" value="ECO:0007669"/>
    <property type="project" value="InterPro"/>
</dbReference>
<dbReference type="GO" id="GO:0015415">
    <property type="term" value="F:ATPase-coupled phosphate ion transmembrane transporter activity"/>
    <property type="evidence" value="ECO:0007669"/>
    <property type="project" value="UniProtKB-EC"/>
</dbReference>
<dbReference type="GO" id="GO:0035435">
    <property type="term" value="P:phosphate ion transmembrane transport"/>
    <property type="evidence" value="ECO:0007669"/>
    <property type="project" value="InterPro"/>
</dbReference>
<dbReference type="CDD" id="cd03260">
    <property type="entry name" value="ABC_PstB_phosphate_transporter"/>
    <property type="match status" value="1"/>
</dbReference>
<dbReference type="Gene3D" id="3.40.50.300">
    <property type="entry name" value="P-loop containing nucleotide triphosphate hydrolases"/>
    <property type="match status" value="1"/>
</dbReference>
<dbReference type="InterPro" id="IPR003593">
    <property type="entry name" value="AAA+_ATPase"/>
</dbReference>
<dbReference type="InterPro" id="IPR003439">
    <property type="entry name" value="ABC_transporter-like_ATP-bd"/>
</dbReference>
<dbReference type="InterPro" id="IPR017871">
    <property type="entry name" value="ABC_transporter-like_CS"/>
</dbReference>
<dbReference type="InterPro" id="IPR027417">
    <property type="entry name" value="P-loop_NTPase"/>
</dbReference>
<dbReference type="InterPro" id="IPR005670">
    <property type="entry name" value="PstB-like"/>
</dbReference>
<dbReference type="NCBIfam" id="TIGR00972">
    <property type="entry name" value="3a0107s01c2"/>
    <property type="match status" value="1"/>
</dbReference>
<dbReference type="PANTHER" id="PTHR43423">
    <property type="entry name" value="ABC TRANSPORTER I FAMILY MEMBER 17"/>
    <property type="match status" value="1"/>
</dbReference>
<dbReference type="PANTHER" id="PTHR43423:SF9">
    <property type="entry name" value="PHOSPHATE IMPORT ATP-BINDING PROTEIN PSTB 3"/>
    <property type="match status" value="1"/>
</dbReference>
<dbReference type="Pfam" id="PF00005">
    <property type="entry name" value="ABC_tran"/>
    <property type="match status" value="1"/>
</dbReference>
<dbReference type="SMART" id="SM00382">
    <property type="entry name" value="AAA"/>
    <property type="match status" value="1"/>
</dbReference>
<dbReference type="SUPFAM" id="SSF52540">
    <property type="entry name" value="P-loop containing nucleoside triphosphate hydrolases"/>
    <property type="match status" value="1"/>
</dbReference>
<dbReference type="PROSITE" id="PS00211">
    <property type="entry name" value="ABC_TRANSPORTER_1"/>
    <property type="match status" value="1"/>
</dbReference>
<dbReference type="PROSITE" id="PS50893">
    <property type="entry name" value="ABC_TRANSPORTER_2"/>
    <property type="match status" value="1"/>
</dbReference>
<dbReference type="PROSITE" id="PS51238">
    <property type="entry name" value="PSTB"/>
    <property type="match status" value="1"/>
</dbReference>
<feature type="chain" id="PRO_0000092821" description="Phosphate import ATP-binding protein PstB 2">
    <location>
        <begin position="1"/>
        <end position="268"/>
    </location>
</feature>
<feature type="domain" description="ABC transporter" evidence="1">
    <location>
        <begin position="19"/>
        <end position="263"/>
    </location>
</feature>
<feature type="binding site" evidence="1">
    <location>
        <begin position="51"/>
        <end position="58"/>
    </location>
    <ligand>
        <name>ATP</name>
        <dbReference type="ChEBI" id="CHEBI:30616"/>
    </ligand>
</feature>
<proteinExistence type="inferred from homology"/>
<sequence length="268" mass="30016">MSSEQLQADQVPTKAGIAYKVRNMAFFYGTKKALDNISVDLPAKSVTAIIGPSGCGKSTFIKALNRIAEAETKVRIDGQIELFGQNIYDPKVNITRLRRRVGMVFQRPNPFPMTIYDNITYGPRVFGFKGNYDEIVETSLRRAALWNEVKDKVKTSALGLSGGQQQRLCIARSLAVNPDVLLMDEPCSALDPIATLRIEELIETLRDQFTIIIVTHNMQQAGRVSQNTLFFNTDESRIGQLVENGPTKEIFFSPKDKRTEDYISGRFG</sequence>
<keyword id="KW-0067">ATP-binding</keyword>
<keyword id="KW-0997">Cell inner membrane</keyword>
<keyword id="KW-1003">Cell membrane</keyword>
<keyword id="KW-0472">Membrane</keyword>
<keyword id="KW-0547">Nucleotide-binding</keyword>
<keyword id="KW-0592">Phosphate transport</keyword>
<keyword id="KW-1185">Reference proteome</keyword>
<keyword id="KW-1278">Translocase</keyword>
<keyword id="KW-0813">Transport</keyword>
<reference key="1">
    <citation type="journal article" date="2003" name="DNA Res.">
        <title>Complete genome structure of Gloeobacter violaceus PCC 7421, a cyanobacterium that lacks thylakoids.</title>
        <authorList>
            <person name="Nakamura Y."/>
            <person name="Kaneko T."/>
            <person name="Sato S."/>
            <person name="Mimuro M."/>
            <person name="Miyashita H."/>
            <person name="Tsuchiya T."/>
            <person name="Sasamoto S."/>
            <person name="Watanabe A."/>
            <person name="Kawashima K."/>
            <person name="Kishida Y."/>
            <person name="Kiyokawa C."/>
            <person name="Kohara M."/>
            <person name="Matsumoto M."/>
            <person name="Matsuno A."/>
            <person name="Nakazaki N."/>
            <person name="Shimpo S."/>
            <person name="Takeuchi C."/>
            <person name="Yamada M."/>
            <person name="Tabata S."/>
        </authorList>
    </citation>
    <scope>NUCLEOTIDE SEQUENCE [LARGE SCALE GENOMIC DNA]</scope>
    <source>
        <strain>ATCC 29082 / PCC 7421</strain>
    </source>
</reference>
<accession>Q7NNG3</accession>
<organism>
    <name type="scientific">Gloeobacter violaceus (strain ATCC 29082 / PCC 7421)</name>
    <dbReference type="NCBI Taxonomy" id="251221"/>
    <lineage>
        <taxon>Bacteria</taxon>
        <taxon>Bacillati</taxon>
        <taxon>Cyanobacteriota</taxon>
        <taxon>Cyanophyceae</taxon>
        <taxon>Gloeobacterales</taxon>
        <taxon>Gloeobacteraceae</taxon>
        <taxon>Gloeobacter</taxon>
    </lineage>
</organism>
<protein>
    <recommendedName>
        <fullName evidence="1">Phosphate import ATP-binding protein PstB 2</fullName>
        <ecNumber evidence="1">7.3.2.1</ecNumber>
    </recommendedName>
    <alternativeName>
        <fullName evidence="1">ABC phosphate transporter 2</fullName>
    </alternativeName>
    <alternativeName>
        <fullName evidence="1">Phosphate-transporting ATPase 2</fullName>
    </alternativeName>
</protein>